<gene>
    <name evidence="1" type="primary">clpP</name>
    <name type="ordered locus">LCK_00388</name>
</gene>
<keyword id="KW-0963">Cytoplasm</keyword>
<keyword id="KW-0378">Hydrolase</keyword>
<keyword id="KW-0645">Protease</keyword>
<keyword id="KW-1185">Reference proteome</keyword>
<keyword id="KW-0720">Serine protease</keyword>
<organism>
    <name type="scientific">Leuconostoc citreum (strain KM20)</name>
    <dbReference type="NCBI Taxonomy" id="349519"/>
    <lineage>
        <taxon>Bacteria</taxon>
        <taxon>Bacillati</taxon>
        <taxon>Bacillota</taxon>
        <taxon>Bacilli</taxon>
        <taxon>Lactobacillales</taxon>
        <taxon>Lactobacillaceae</taxon>
        <taxon>Leuconostoc</taxon>
    </lineage>
</organism>
<protein>
    <recommendedName>
        <fullName evidence="1">ATP-dependent Clp protease proteolytic subunit</fullName>
        <ecNumber evidence="1">3.4.21.92</ecNumber>
    </recommendedName>
    <alternativeName>
        <fullName evidence="1">Endopeptidase Clp</fullName>
    </alternativeName>
</protein>
<accession>B1MXG9</accession>
<feature type="chain" id="PRO_1000206157" description="ATP-dependent Clp protease proteolytic subunit">
    <location>
        <begin position="1"/>
        <end position="200"/>
    </location>
</feature>
<feature type="active site" description="Nucleophile" evidence="1">
    <location>
        <position position="96"/>
    </location>
</feature>
<feature type="active site" evidence="1">
    <location>
        <position position="121"/>
    </location>
</feature>
<comment type="function">
    <text evidence="1">Cleaves peptides in various proteins in a process that requires ATP hydrolysis. Has a chymotrypsin-like activity. Plays a major role in the degradation of misfolded proteins.</text>
</comment>
<comment type="catalytic activity">
    <reaction evidence="1">
        <text>Hydrolysis of proteins to small peptides in the presence of ATP and magnesium. alpha-casein is the usual test substrate. In the absence of ATP, only oligopeptides shorter than five residues are hydrolyzed (such as succinyl-Leu-Tyr-|-NHMec, and Leu-Tyr-Leu-|-Tyr-Trp, in which cleavage of the -Tyr-|-Leu- and -Tyr-|-Trp bonds also occurs).</text>
        <dbReference type="EC" id="3.4.21.92"/>
    </reaction>
</comment>
<comment type="subunit">
    <text evidence="1">Fourteen ClpP subunits assemble into 2 heptameric rings which stack back to back to give a disk-like structure with a central cavity, resembling the structure of eukaryotic proteasomes.</text>
</comment>
<comment type="subcellular location">
    <subcellularLocation>
        <location evidence="1">Cytoplasm</location>
    </subcellularLocation>
</comment>
<comment type="similarity">
    <text evidence="1">Belongs to the peptidase S14 family.</text>
</comment>
<dbReference type="EC" id="3.4.21.92" evidence="1"/>
<dbReference type="EMBL" id="DQ489736">
    <property type="protein sequence ID" value="ACA82221.1"/>
    <property type="molecule type" value="Genomic_DNA"/>
</dbReference>
<dbReference type="RefSeq" id="WP_004900057.1">
    <property type="nucleotide sequence ID" value="NC_010471.1"/>
</dbReference>
<dbReference type="SMR" id="B1MXG9"/>
<dbReference type="STRING" id="349519.LCK_00388"/>
<dbReference type="MEROPS" id="S14.001"/>
<dbReference type="KEGG" id="lci:LCK_00388"/>
<dbReference type="eggNOG" id="COG0740">
    <property type="taxonomic scope" value="Bacteria"/>
</dbReference>
<dbReference type="HOGENOM" id="CLU_058707_3_2_9"/>
<dbReference type="OrthoDB" id="9802800at2"/>
<dbReference type="Proteomes" id="UP000002166">
    <property type="component" value="Chromosome"/>
</dbReference>
<dbReference type="GO" id="GO:0005737">
    <property type="term" value="C:cytoplasm"/>
    <property type="evidence" value="ECO:0007669"/>
    <property type="project" value="UniProtKB-SubCell"/>
</dbReference>
<dbReference type="GO" id="GO:0009368">
    <property type="term" value="C:endopeptidase Clp complex"/>
    <property type="evidence" value="ECO:0007669"/>
    <property type="project" value="TreeGrafter"/>
</dbReference>
<dbReference type="GO" id="GO:0004176">
    <property type="term" value="F:ATP-dependent peptidase activity"/>
    <property type="evidence" value="ECO:0007669"/>
    <property type="project" value="InterPro"/>
</dbReference>
<dbReference type="GO" id="GO:0051117">
    <property type="term" value="F:ATPase binding"/>
    <property type="evidence" value="ECO:0007669"/>
    <property type="project" value="TreeGrafter"/>
</dbReference>
<dbReference type="GO" id="GO:0004252">
    <property type="term" value="F:serine-type endopeptidase activity"/>
    <property type="evidence" value="ECO:0007669"/>
    <property type="project" value="UniProtKB-UniRule"/>
</dbReference>
<dbReference type="GO" id="GO:0006515">
    <property type="term" value="P:protein quality control for misfolded or incompletely synthesized proteins"/>
    <property type="evidence" value="ECO:0007669"/>
    <property type="project" value="TreeGrafter"/>
</dbReference>
<dbReference type="CDD" id="cd07017">
    <property type="entry name" value="S14_ClpP_2"/>
    <property type="match status" value="1"/>
</dbReference>
<dbReference type="FunFam" id="3.90.226.10:FF:000002">
    <property type="entry name" value="ATP-dependent Clp protease proteolytic subunit"/>
    <property type="match status" value="1"/>
</dbReference>
<dbReference type="Gene3D" id="3.90.226.10">
    <property type="entry name" value="2-enoyl-CoA Hydratase, Chain A, domain 1"/>
    <property type="match status" value="1"/>
</dbReference>
<dbReference type="HAMAP" id="MF_00444">
    <property type="entry name" value="ClpP"/>
    <property type="match status" value="1"/>
</dbReference>
<dbReference type="InterPro" id="IPR001907">
    <property type="entry name" value="ClpP"/>
</dbReference>
<dbReference type="InterPro" id="IPR029045">
    <property type="entry name" value="ClpP/crotonase-like_dom_sf"/>
</dbReference>
<dbReference type="InterPro" id="IPR023562">
    <property type="entry name" value="ClpP/TepA"/>
</dbReference>
<dbReference type="InterPro" id="IPR033135">
    <property type="entry name" value="ClpP_His_AS"/>
</dbReference>
<dbReference type="InterPro" id="IPR018215">
    <property type="entry name" value="ClpP_Ser_AS"/>
</dbReference>
<dbReference type="NCBIfam" id="NF001368">
    <property type="entry name" value="PRK00277.1"/>
    <property type="match status" value="1"/>
</dbReference>
<dbReference type="NCBIfam" id="NF009205">
    <property type="entry name" value="PRK12553.1"/>
    <property type="match status" value="1"/>
</dbReference>
<dbReference type="PANTHER" id="PTHR10381">
    <property type="entry name" value="ATP-DEPENDENT CLP PROTEASE PROTEOLYTIC SUBUNIT"/>
    <property type="match status" value="1"/>
</dbReference>
<dbReference type="PANTHER" id="PTHR10381:SF70">
    <property type="entry name" value="ATP-DEPENDENT CLP PROTEASE PROTEOLYTIC SUBUNIT"/>
    <property type="match status" value="1"/>
</dbReference>
<dbReference type="Pfam" id="PF00574">
    <property type="entry name" value="CLP_protease"/>
    <property type="match status" value="1"/>
</dbReference>
<dbReference type="PRINTS" id="PR00127">
    <property type="entry name" value="CLPPROTEASEP"/>
</dbReference>
<dbReference type="SUPFAM" id="SSF52096">
    <property type="entry name" value="ClpP/crotonase"/>
    <property type="match status" value="1"/>
</dbReference>
<dbReference type="PROSITE" id="PS00382">
    <property type="entry name" value="CLP_PROTEASE_HIS"/>
    <property type="match status" value="1"/>
</dbReference>
<dbReference type="PROSITE" id="PS00381">
    <property type="entry name" value="CLP_PROTEASE_SER"/>
    <property type="match status" value="1"/>
</dbReference>
<evidence type="ECO:0000255" key="1">
    <source>
        <dbReference type="HAMAP-Rule" id="MF_00444"/>
    </source>
</evidence>
<name>CLPP_LEUCK</name>
<proteinExistence type="inferred from homology"/>
<reference key="1">
    <citation type="journal article" date="2008" name="J. Bacteriol.">
        <title>Complete genome sequence of Leuconostoc citreum KM20.</title>
        <authorList>
            <person name="Kim J.F."/>
            <person name="Jeong H."/>
            <person name="Lee J.-S."/>
            <person name="Choi S.-H."/>
            <person name="Ha M."/>
            <person name="Hur C.-G."/>
            <person name="Kim J.-S."/>
            <person name="Lee S."/>
            <person name="Park H.-S."/>
            <person name="Park Y.-H."/>
            <person name="Oh T.K."/>
        </authorList>
    </citation>
    <scope>NUCLEOTIDE SEQUENCE [LARGE SCALE GENOMIC DNA]</scope>
    <source>
        <strain>KM20</strain>
    </source>
</reference>
<sequence>MWPGVIEQTANGRESYDLPSRLLKDRIVLVQGEVEDSMATSIVAQLLFLEAQDPTKEISMYINSPGGSVTAGLSITDTMNFIKAPVTTIVMGLAASMGTIIASSGEKGHRFMLPNAEYLIHQPMGGAVGGTQQTDMAIIAEQLTKTRDKLNKILADASDRDLETIARDTERDHWMSAEETLAYGFIDGILTKSGEKPTTK</sequence>